<keyword id="KW-0150">Chloroplast</keyword>
<keyword id="KW-0934">Plastid</keyword>
<organism>
    <name type="scientific">Pyropia yezoensis</name>
    <name type="common">Susabi-nori</name>
    <name type="synonym">Porphyra yezoensis</name>
    <dbReference type="NCBI Taxonomy" id="2788"/>
    <lineage>
        <taxon>Eukaryota</taxon>
        <taxon>Rhodophyta</taxon>
        <taxon>Bangiophyceae</taxon>
        <taxon>Bangiales</taxon>
        <taxon>Bangiaceae</taxon>
        <taxon>Pyropia</taxon>
    </lineage>
</organism>
<sequence>MYKKNISNIFLLPNDILKRIYICNKKKKLIPHSFLINLFQKQIGYPKSFANLNWAFSKIIKWYYDRGYQWSLVEVKQASDASSIVIDIHEGVVKTIITEYYTLSYKRVSGILCVESIEQYLGVRVGAPLNIIDLQKKITYLKDNQLVGDIIYSIERSNNSSMSLDIKFQIQELKDKEIIVLAESSSIISHACNLLNQYRNRLVASNIVSLSTNKLHACYFNYKLDYQYKYINTSNLIKLLAYSISCRKTLLIHYFNLQTLISCTKKNTIGFQLYLRNLSFGKAFCVLSMKFIKNGLNIKILYINPSLIVDQNFVFQFAIQIIKQYHTAKPPALFLTNLDLEQYVAESLLMYHFTSCFSISEKILLSRIMHTDSLFFNSENFHFDDRTNAINSYDTFKQNTKIFYQEFLSLLLSLRYQNFTYLGWPLKGHFFEIKSLYLAPFQKSDFSDSRKTLFFHKMSLKQVSNFNLPVSFKSHLNHILVSTIKCQSNLNMRTVSLLLIDSPAEYLLYKSILNFSIKVRMQYFIPMSNNIRLSLFYNYLDCFLIRSSQSCIHIWQDLRTLTPIQNFWLKKFSYGAGIQLKLPIKQMPPLSIEYTVTSSRYFCIYLRTYYQR</sequence>
<dbReference type="EMBL" id="AP006715">
    <property type="protein sequence ID" value="BAE92358.1"/>
    <property type="molecule type" value="Genomic_DNA"/>
</dbReference>
<dbReference type="RefSeq" id="YP_536915.1">
    <property type="nucleotide sequence ID" value="NC_007932.1"/>
</dbReference>
<dbReference type="SMR" id="Q1XDQ3"/>
<dbReference type="GeneID" id="3978911"/>
<dbReference type="GO" id="GO:0009507">
    <property type="term" value="C:chloroplast"/>
    <property type="evidence" value="ECO:0007669"/>
    <property type="project" value="UniProtKB-SubCell"/>
</dbReference>
<dbReference type="Gene3D" id="3.10.20.310">
    <property type="entry name" value="membrane protein fhac"/>
    <property type="match status" value="1"/>
</dbReference>
<comment type="subcellular location">
    <subcellularLocation>
        <location>Plastid</location>
        <location>Chloroplast</location>
    </subcellularLocation>
</comment>
<name>YCXB_PYRYE</name>
<geneLocation type="chloroplast"/>
<reference key="1">
    <citation type="submission" date="2003-11" db="EMBL/GenBank/DDBJ databases">
        <title>Whole genome sequence of Porphyra yezoensis chloroplast.</title>
        <authorList>
            <person name="Kunimoto M."/>
            <person name="Morishima K."/>
            <person name="Yoshikawa M."/>
            <person name="Fukuda S."/>
            <person name="Kobayashi T."/>
            <person name="Kobayashi M."/>
            <person name="Okazaki T."/>
            <person name="Ohara I."/>
            <person name="Nakayama I."/>
        </authorList>
    </citation>
    <scope>NUCLEOTIDE SEQUENCE [LARGE SCALE GENOMIC DNA]</scope>
    <source>
        <strain>U-51</strain>
    </source>
</reference>
<feature type="chain" id="PRO_0000277381" description="Uncharacterized protein ORF621">
    <location>
        <begin position="1"/>
        <end position="612"/>
    </location>
</feature>
<proteinExistence type="predicted"/>
<protein>
    <recommendedName>
        <fullName>Uncharacterized protein ORF621</fullName>
    </recommendedName>
</protein>
<accession>Q1XDQ3</accession>